<protein>
    <recommendedName>
        <fullName evidence="1">Siroheme synthase</fullName>
    </recommendedName>
    <domain>
        <recommendedName>
            <fullName evidence="1">Uroporphyrinogen-III C-methyltransferase</fullName>
            <shortName evidence="1">Urogen III methylase</shortName>
            <ecNumber evidence="1">2.1.1.107</ecNumber>
        </recommendedName>
        <alternativeName>
            <fullName evidence="1">SUMT</fullName>
        </alternativeName>
        <alternativeName>
            <fullName evidence="1">Uroporphyrinogen III methylase</fullName>
            <shortName evidence="1">UROM</shortName>
        </alternativeName>
    </domain>
    <domain>
        <recommendedName>
            <fullName evidence="1">Precorrin-2 dehydrogenase</fullName>
            <ecNumber evidence="1">1.3.1.76</ecNumber>
        </recommendedName>
    </domain>
    <domain>
        <recommendedName>
            <fullName evidence="1">Sirohydrochlorin ferrochelatase</fullName>
            <ecNumber evidence="1">4.99.1.4</ecNumber>
        </recommendedName>
    </domain>
</protein>
<dbReference type="EC" id="2.1.1.107" evidence="1"/>
<dbReference type="EC" id="1.3.1.76" evidence="1"/>
<dbReference type="EC" id="4.99.1.4" evidence="1"/>
<dbReference type="EMBL" id="CP000323">
    <property type="protein sequence ID" value="ABE75176.1"/>
    <property type="status" value="ALT_INIT"/>
    <property type="molecule type" value="Genomic_DNA"/>
</dbReference>
<dbReference type="RefSeq" id="WP_041753116.1">
    <property type="nucleotide sequence ID" value="NC_007969.1"/>
</dbReference>
<dbReference type="SMR" id="Q1QAX7"/>
<dbReference type="STRING" id="335284.Pcryo_1397"/>
<dbReference type="KEGG" id="pcr:Pcryo_1397"/>
<dbReference type="eggNOG" id="COG0007">
    <property type="taxonomic scope" value="Bacteria"/>
</dbReference>
<dbReference type="eggNOG" id="COG1648">
    <property type="taxonomic scope" value="Bacteria"/>
</dbReference>
<dbReference type="HOGENOM" id="CLU_011276_2_1_6"/>
<dbReference type="UniPathway" id="UPA00148">
    <property type="reaction ID" value="UER00211"/>
</dbReference>
<dbReference type="UniPathway" id="UPA00148">
    <property type="reaction ID" value="UER00222"/>
</dbReference>
<dbReference type="UniPathway" id="UPA00262">
    <property type="reaction ID" value="UER00211"/>
</dbReference>
<dbReference type="UniPathway" id="UPA00262">
    <property type="reaction ID" value="UER00222"/>
</dbReference>
<dbReference type="UniPathway" id="UPA00262">
    <property type="reaction ID" value="UER00376"/>
</dbReference>
<dbReference type="Proteomes" id="UP000002425">
    <property type="component" value="Chromosome"/>
</dbReference>
<dbReference type="GO" id="GO:0051287">
    <property type="term" value="F:NAD binding"/>
    <property type="evidence" value="ECO:0007669"/>
    <property type="project" value="InterPro"/>
</dbReference>
<dbReference type="GO" id="GO:0043115">
    <property type="term" value="F:precorrin-2 dehydrogenase activity"/>
    <property type="evidence" value="ECO:0007669"/>
    <property type="project" value="UniProtKB-UniRule"/>
</dbReference>
<dbReference type="GO" id="GO:0051266">
    <property type="term" value="F:sirohydrochlorin ferrochelatase activity"/>
    <property type="evidence" value="ECO:0007669"/>
    <property type="project" value="UniProtKB-EC"/>
</dbReference>
<dbReference type="GO" id="GO:0004851">
    <property type="term" value="F:uroporphyrin-III C-methyltransferase activity"/>
    <property type="evidence" value="ECO:0007669"/>
    <property type="project" value="UniProtKB-UniRule"/>
</dbReference>
<dbReference type="GO" id="GO:0009236">
    <property type="term" value="P:cobalamin biosynthetic process"/>
    <property type="evidence" value="ECO:0007669"/>
    <property type="project" value="UniProtKB-UniRule"/>
</dbReference>
<dbReference type="GO" id="GO:0032259">
    <property type="term" value="P:methylation"/>
    <property type="evidence" value="ECO:0007669"/>
    <property type="project" value="UniProtKB-KW"/>
</dbReference>
<dbReference type="GO" id="GO:0019354">
    <property type="term" value="P:siroheme biosynthetic process"/>
    <property type="evidence" value="ECO:0007669"/>
    <property type="project" value="UniProtKB-UniRule"/>
</dbReference>
<dbReference type="CDD" id="cd11642">
    <property type="entry name" value="SUMT"/>
    <property type="match status" value="1"/>
</dbReference>
<dbReference type="FunFam" id="3.30.160.110:FF:000001">
    <property type="entry name" value="Siroheme synthase"/>
    <property type="match status" value="1"/>
</dbReference>
<dbReference type="FunFam" id="3.30.950.10:FF:000001">
    <property type="entry name" value="Siroheme synthase"/>
    <property type="match status" value="1"/>
</dbReference>
<dbReference type="FunFam" id="3.40.1010.10:FF:000001">
    <property type="entry name" value="Siroheme synthase"/>
    <property type="match status" value="1"/>
</dbReference>
<dbReference type="Gene3D" id="3.40.1010.10">
    <property type="entry name" value="Cobalt-precorrin-4 Transmethylase, Domain 1"/>
    <property type="match status" value="1"/>
</dbReference>
<dbReference type="Gene3D" id="3.30.950.10">
    <property type="entry name" value="Methyltransferase, Cobalt-precorrin-4 Transmethylase, Domain 2"/>
    <property type="match status" value="1"/>
</dbReference>
<dbReference type="Gene3D" id="3.40.50.720">
    <property type="entry name" value="NAD(P)-binding Rossmann-like Domain"/>
    <property type="match status" value="1"/>
</dbReference>
<dbReference type="Gene3D" id="1.10.8.210">
    <property type="entry name" value="Sirohaem synthase, dimerisation domain"/>
    <property type="match status" value="1"/>
</dbReference>
<dbReference type="Gene3D" id="3.30.160.110">
    <property type="entry name" value="Siroheme synthase, domain 2"/>
    <property type="match status" value="1"/>
</dbReference>
<dbReference type="HAMAP" id="MF_01646">
    <property type="entry name" value="Siroheme_synth"/>
    <property type="match status" value="1"/>
</dbReference>
<dbReference type="InterPro" id="IPR000878">
    <property type="entry name" value="4pyrrol_Mease"/>
</dbReference>
<dbReference type="InterPro" id="IPR035996">
    <property type="entry name" value="4pyrrol_Methylase_sf"/>
</dbReference>
<dbReference type="InterPro" id="IPR014777">
    <property type="entry name" value="4pyrrole_Mease_sub1"/>
</dbReference>
<dbReference type="InterPro" id="IPR014776">
    <property type="entry name" value="4pyrrole_Mease_sub2"/>
</dbReference>
<dbReference type="InterPro" id="IPR006366">
    <property type="entry name" value="CobA/CysG_C"/>
</dbReference>
<dbReference type="InterPro" id="IPR036291">
    <property type="entry name" value="NAD(P)-bd_dom_sf"/>
</dbReference>
<dbReference type="InterPro" id="IPR050161">
    <property type="entry name" value="Siro_Cobalamin_biosynth"/>
</dbReference>
<dbReference type="InterPro" id="IPR037115">
    <property type="entry name" value="Sirohaem_synt_dimer_dom_sf"/>
</dbReference>
<dbReference type="InterPro" id="IPR012409">
    <property type="entry name" value="Sirohaem_synth"/>
</dbReference>
<dbReference type="InterPro" id="IPR028281">
    <property type="entry name" value="Sirohaem_synthase_central"/>
</dbReference>
<dbReference type="InterPro" id="IPR019478">
    <property type="entry name" value="Sirohaem_synthase_dimer_dom"/>
</dbReference>
<dbReference type="InterPro" id="IPR006367">
    <property type="entry name" value="Sirohaem_synthase_N"/>
</dbReference>
<dbReference type="InterPro" id="IPR003043">
    <property type="entry name" value="Uropor_MeTrfase_CS"/>
</dbReference>
<dbReference type="NCBIfam" id="TIGR01469">
    <property type="entry name" value="cobA_cysG_Cterm"/>
    <property type="match status" value="1"/>
</dbReference>
<dbReference type="NCBIfam" id="TIGR01470">
    <property type="entry name" value="cysG_Nterm"/>
    <property type="match status" value="1"/>
</dbReference>
<dbReference type="NCBIfam" id="NF004790">
    <property type="entry name" value="PRK06136.1"/>
    <property type="match status" value="1"/>
</dbReference>
<dbReference type="NCBIfam" id="NF007922">
    <property type="entry name" value="PRK10637.1"/>
    <property type="match status" value="1"/>
</dbReference>
<dbReference type="PANTHER" id="PTHR45790:SF1">
    <property type="entry name" value="SIROHEME SYNTHASE"/>
    <property type="match status" value="1"/>
</dbReference>
<dbReference type="PANTHER" id="PTHR45790">
    <property type="entry name" value="SIROHEME SYNTHASE-RELATED"/>
    <property type="match status" value="1"/>
</dbReference>
<dbReference type="Pfam" id="PF10414">
    <property type="entry name" value="CysG_dimeriser"/>
    <property type="match status" value="1"/>
</dbReference>
<dbReference type="Pfam" id="PF13241">
    <property type="entry name" value="NAD_binding_7"/>
    <property type="match status" value="1"/>
</dbReference>
<dbReference type="Pfam" id="PF14824">
    <property type="entry name" value="Sirohm_synth_M"/>
    <property type="match status" value="1"/>
</dbReference>
<dbReference type="Pfam" id="PF00590">
    <property type="entry name" value="TP_methylase"/>
    <property type="match status" value="1"/>
</dbReference>
<dbReference type="PIRSF" id="PIRSF036426">
    <property type="entry name" value="Sirohaem_synth"/>
    <property type="match status" value="1"/>
</dbReference>
<dbReference type="SUPFAM" id="SSF51735">
    <property type="entry name" value="NAD(P)-binding Rossmann-fold domains"/>
    <property type="match status" value="1"/>
</dbReference>
<dbReference type="SUPFAM" id="SSF75615">
    <property type="entry name" value="Siroheme synthase middle domains-like"/>
    <property type="match status" value="1"/>
</dbReference>
<dbReference type="SUPFAM" id="SSF53790">
    <property type="entry name" value="Tetrapyrrole methylase"/>
    <property type="match status" value="1"/>
</dbReference>
<dbReference type="PROSITE" id="PS00840">
    <property type="entry name" value="SUMT_2"/>
    <property type="match status" value="1"/>
</dbReference>
<comment type="function">
    <text evidence="1">Multifunctional enzyme that catalyzes the SAM-dependent methylations of uroporphyrinogen III at position C-2 and C-7 to form precorrin-2 via precorrin-1. Then it catalyzes the NAD-dependent ring dehydrogenation of precorrin-2 to yield sirohydrochlorin. Finally, it catalyzes the ferrochelation of sirohydrochlorin to yield siroheme.</text>
</comment>
<comment type="catalytic activity">
    <reaction evidence="1">
        <text>uroporphyrinogen III + 2 S-adenosyl-L-methionine = precorrin-2 + 2 S-adenosyl-L-homocysteine + H(+)</text>
        <dbReference type="Rhea" id="RHEA:32459"/>
        <dbReference type="ChEBI" id="CHEBI:15378"/>
        <dbReference type="ChEBI" id="CHEBI:57308"/>
        <dbReference type="ChEBI" id="CHEBI:57856"/>
        <dbReference type="ChEBI" id="CHEBI:58827"/>
        <dbReference type="ChEBI" id="CHEBI:59789"/>
        <dbReference type="EC" id="2.1.1.107"/>
    </reaction>
</comment>
<comment type="catalytic activity">
    <reaction evidence="1">
        <text>precorrin-2 + NAD(+) = sirohydrochlorin + NADH + 2 H(+)</text>
        <dbReference type="Rhea" id="RHEA:15613"/>
        <dbReference type="ChEBI" id="CHEBI:15378"/>
        <dbReference type="ChEBI" id="CHEBI:57540"/>
        <dbReference type="ChEBI" id="CHEBI:57945"/>
        <dbReference type="ChEBI" id="CHEBI:58351"/>
        <dbReference type="ChEBI" id="CHEBI:58827"/>
        <dbReference type="EC" id="1.3.1.76"/>
    </reaction>
</comment>
<comment type="catalytic activity">
    <reaction evidence="1">
        <text>siroheme + 2 H(+) = sirohydrochlorin + Fe(2+)</text>
        <dbReference type="Rhea" id="RHEA:24360"/>
        <dbReference type="ChEBI" id="CHEBI:15378"/>
        <dbReference type="ChEBI" id="CHEBI:29033"/>
        <dbReference type="ChEBI" id="CHEBI:58351"/>
        <dbReference type="ChEBI" id="CHEBI:60052"/>
        <dbReference type="EC" id="4.99.1.4"/>
    </reaction>
</comment>
<comment type="pathway">
    <text evidence="1">Cofactor biosynthesis; adenosylcobalamin biosynthesis; precorrin-2 from uroporphyrinogen III: step 1/1.</text>
</comment>
<comment type="pathway">
    <text evidence="1">Cofactor biosynthesis; adenosylcobalamin biosynthesis; sirohydrochlorin from precorrin-2: step 1/1.</text>
</comment>
<comment type="pathway">
    <text evidence="1">Porphyrin-containing compound metabolism; siroheme biosynthesis; precorrin-2 from uroporphyrinogen III: step 1/1.</text>
</comment>
<comment type="pathway">
    <text evidence="1">Porphyrin-containing compound metabolism; siroheme biosynthesis; siroheme from sirohydrochlorin: step 1/1.</text>
</comment>
<comment type="pathway">
    <text evidence="1">Porphyrin-containing compound metabolism; siroheme biosynthesis; sirohydrochlorin from precorrin-2: step 1/1.</text>
</comment>
<comment type="similarity">
    <text evidence="1">In the N-terminal section; belongs to the precorrin-2 dehydrogenase / sirohydrochlorin ferrochelatase family.</text>
</comment>
<comment type="similarity">
    <text evidence="1">In the C-terminal section; belongs to the precorrin methyltransferase family.</text>
</comment>
<comment type="sequence caution" evidence="2">
    <conflict type="erroneous initiation">
        <sequence resource="EMBL-CDS" id="ABE75176"/>
    </conflict>
    <text>Extended N-terminus.</text>
</comment>
<name>CYSG_PSYCK</name>
<proteinExistence type="inferred from homology"/>
<organism>
    <name type="scientific">Psychrobacter cryohalolentis (strain ATCC BAA-1226 / DSM 17306 / VKM B-2378 / K5)</name>
    <dbReference type="NCBI Taxonomy" id="335284"/>
    <lineage>
        <taxon>Bacteria</taxon>
        <taxon>Pseudomonadati</taxon>
        <taxon>Pseudomonadota</taxon>
        <taxon>Gammaproteobacteria</taxon>
        <taxon>Moraxellales</taxon>
        <taxon>Moraxellaceae</taxon>
        <taxon>Psychrobacter</taxon>
    </lineage>
</organism>
<sequence length="523" mass="56795">MNTFPLFFKLEDRKVLIVGGGDVALRKADLLSRAGACITVLAPSISHEIQALLSDSKHALIYENYNKTYMTDSRVIIAATDDETLNHQIHSDATALNIPVNVVDTPHLCDFIFPAIVDRNPIVIGISSNGKAPVLARLLRARLETLIPQGYGKLAKLAGEFRGDVKAKIPTLTGRRQFWEQVFEGKVSQLMFSGNENEAIAQLQADLDNTAANITAKNATDESTEAQNTMGEVYIVGAGPGDPELLTFKALRLMQQADIVYYDALVSPQVLDLCRRDADKVFVGKKRSNHAVAQLGINELLVNSAKEGRRVVRLKGGDPFIFGRGGEEIESLRSHNVPYQVVPGITAANAAASYAGIPLTHRDHSQSVRFVTGFLKAGAPNNNFKSFLNTDETVVFYMGLHSLPRLTQGLIDAGRSAKTPIAIVSNASMPNQQVLTGTLASIVELQAQHQLPTPALLIMGDVVSLHHDLAWYNNKKTSENDNNWLRGGTATTPKPNPNQQAHALSMIANLATEDGGLEQLVID</sequence>
<keyword id="KW-0169">Cobalamin biosynthesis</keyword>
<keyword id="KW-0456">Lyase</keyword>
<keyword id="KW-0489">Methyltransferase</keyword>
<keyword id="KW-0511">Multifunctional enzyme</keyword>
<keyword id="KW-0520">NAD</keyword>
<keyword id="KW-0560">Oxidoreductase</keyword>
<keyword id="KW-0597">Phosphoprotein</keyword>
<keyword id="KW-0627">Porphyrin biosynthesis</keyword>
<keyword id="KW-0949">S-adenosyl-L-methionine</keyword>
<keyword id="KW-0808">Transferase</keyword>
<feature type="chain" id="PRO_0000330547" description="Siroheme synthase">
    <location>
        <begin position="1"/>
        <end position="523"/>
    </location>
</feature>
<feature type="region of interest" description="Precorrin-2 dehydrogenase /sirohydrochlorin ferrochelatase" evidence="1">
    <location>
        <begin position="1"/>
        <end position="203"/>
    </location>
</feature>
<feature type="region of interest" description="Uroporphyrinogen-III C-methyltransferase" evidence="1">
    <location>
        <begin position="231"/>
        <end position="523"/>
    </location>
</feature>
<feature type="active site" description="Proton acceptor" evidence="1">
    <location>
        <position position="263"/>
    </location>
</feature>
<feature type="active site" description="Proton donor" evidence="1">
    <location>
        <position position="285"/>
    </location>
</feature>
<feature type="binding site" evidence="1">
    <location>
        <begin position="22"/>
        <end position="23"/>
    </location>
    <ligand>
        <name>NAD(+)</name>
        <dbReference type="ChEBI" id="CHEBI:57540"/>
    </ligand>
</feature>
<feature type="binding site" evidence="1">
    <location>
        <begin position="43"/>
        <end position="44"/>
    </location>
    <ligand>
        <name>NAD(+)</name>
        <dbReference type="ChEBI" id="CHEBI:57540"/>
    </ligand>
</feature>
<feature type="binding site" evidence="1">
    <location>
        <position position="240"/>
    </location>
    <ligand>
        <name>S-adenosyl-L-methionine</name>
        <dbReference type="ChEBI" id="CHEBI:59789"/>
    </ligand>
</feature>
<feature type="binding site" evidence="1">
    <location>
        <begin position="316"/>
        <end position="318"/>
    </location>
    <ligand>
        <name>S-adenosyl-L-methionine</name>
        <dbReference type="ChEBI" id="CHEBI:59789"/>
    </ligand>
</feature>
<feature type="binding site" evidence="1">
    <location>
        <position position="321"/>
    </location>
    <ligand>
        <name>S-adenosyl-L-methionine</name>
        <dbReference type="ChEBI" id="CHEBI:59789"/>
    </ligand>
</feature>
<feature type="binding site" evidence="1">
    <location>
        <begin position="346"/>
        <end position="347"/>
    </location>
    <ligand>
        <name>S-adenosyl-L-methionine</name>
        <dbReference type="ChEBI" id="CHEBI:59789"/>
    </ligand>
</feature>
<feature type="binding site" evidence="1">
    <location>
        <position position="398"/>
    </location>
    <ligand>
        <name>S-adenosyl-L-methionine</name>
        <dbReference type="ChEBI" id="CHEBI:59789"/>
    </ligand>
</feature>
<feature type="binding site" evidence="1">
    <location>
        <position position="427"/>
    </location>
    <ligand>
        <name>S-adenosyl-L-methionine</name>
        <dbReference type="ChEBI" id="CHEBI:59789"/>
    </ligand>
</feature>
<feature type="modified residue" description="Phosphoserine" evidence="1">
    <location>
        <position position="128"/>
    </location>
</feature>
<reference key="1">
    <citation type="submission" date="2006-03" db="EMBL/GenBank/DDBJ databases">
        <title>Complete sequence of chromosome of Psychrobacter cryohalolentis K5.</title>
        <authorList>
            <consortium name="US DOE Joint Genome Institute"/>
            <person name="Copeland A."/>
            <person name="Lucas S."/>
            <person name="Lapidus A."/>
            <person name="Barry K."/>
            <person name="Detter J.C."/>
            <person name="Glavina T."/>
            <person name="Hammon N."/>
            <person name="Israni S."/>
            <person name="Dalin E."/>
            <person name="Tice H."/>
            <person name="Pitluck S."/>
            <person name="Brettin T."/>
            <person name="Bruce D."/>
            <person name="Han C."/>
            <person name="Tapia R."/>
            <person name="Sims D.R."/>
            <person name="Gilna P."/>
            <person name="Schmutz J."/>
            <person name="Larimer F."/>
            <person name="Land M."/>
            <person name="Hauser L."/>
            <person name="Kyrpides N."/>
            <person name="Kim E."/>
            <person name="Richardson P."/>
        </authorList>
    </citation>
    <scope>NUCLEOTIDE SEQUENCE [LARGE SCALE GENOMIC DNA]</scope>
    <source>
        <strain>ATCC BAA-1226 / DSM 17306 / VKM B-2378 / K5</strain>
    </source>
</reference>
<evidence type="ECO:0000255" key="1">
    <source>
        <dbReference type="HAMAP-Rule" id="MF_01646"/>
    </source>
</evidence>
<evidence type="ECO:0000305" key="2"/>
<accession>Q1QAX7</accession>
<gene>
    <name evidence="1" type="primary">cysG</name>
    <name type="ordered locus">Pcryo_1397</name>
</gene>